<reference key="1">
    <citation type="journal article" date="2008" name="Foodborne Pathog. Dis.">
        <title>The complete genome sequence and analysis of the human pathogen Campylobacter lari.</title>
        <authorList>
            <person name="Miller W.G."/>
            <person name="Wang G."/>
            <person name="Binnewies T.T."/>
            <person name="Parker C.T."/>
        </authorList>
    </citation>
    <scope>NUCLEOTIDE SEQUENCE [LARGE SCALE GENOMIC DNA]</scope>
    <source>
        <strain>RM2100 / D67 / ATCC BAA-1060</strain>
    </source>
</reference>
<comment type="function">
    <text evidence="1">Catalyzes the ATP-dependent phosphorylation of L-homoserine to L-homoserine phosphate.</text>
</comment>
<comment type="catalytic activity">
    <reaction evidence="1">
        <text>L-homoserine + ATP = O-phospho-L-homoserine + ADP + H(+)</text>
        <dbReference type="Rhea" id="RHEA:13985"/>
        <dbReference type="ChEBI" id="CHEBI:15378"/>
        <dbReference type="ChEBI" id="CHEBI:30616"/>
        <dbReference type="ChEBI" id="CHEBI:57476"/>
        <dbReference type="ChEBI" id="CHEBI:57590"/>
        <dbReference type="ChEBI" id="CHEBI:456216"/>
        <dbReference type="EC" id="2.7.1.39"/>
    </reaction>
</comment>
<comment type="pathway">
    <text evidence="1">Amino-acid biosynthesis; L-threonine biosynthesis; L-threonine from L-aspartate: step 4/5.</text>
</comment>
<comment type="subcellular location">
    <subcellularLocation>
        <location evidence="1">Cytoplasm</location>
    </subcellularLocation>
</comment>
<comment type="similarity">
    <text evidence="1">Belongs to the GHMP kinase family. Homoserine kinase subfamily.</text>
</comment>
<accession>B9KEU8</accession>
<protein>
    <recommendedName>
        <fullName evidence="1">Homoserine kinase</fullName>
        <shortName evidence="1">HK</shortName>
        <shortName evidence="1">HSK</shortName>
        <ecNumber evidence="1">2.7.1.39</ecNumber>
    </recommendedName>
</protein>
<evidence type="ECO:0000255" key="1">
    <source>
        <dbReference type="HAMAP-Rule" id="MF_00384"/>
    </source>
</evidence>
<name>KHSE_CAMLR</name>
<proteinExistence type="inferred from homology"/>
<feature type="chain" id="PRO_1000134244" description="Homoserine kinase">
    <location>
        <begin position="1"/>
        <end position="292"/>
    </location>
</feature>
<feature type="binding site" evidence="1">
    <location>
        <begin position="84"/>
        <end position="94"/>
    </location>
    <ligand>
        <name>ATP</name>
        <dbReference type="ChEBI" id="CHEBI:30616"/>
    </ligand>
</feature>
<dbReference type="EC" id="2.7.1.39" evidence="1"/>
<dbReference type="EMBL" id="CP000932">
    <property type="protein sequence ID" value="ACM63583.1"/>
    <property type="molecule type" value="Genomic_DNA"/>
</dbReference>
<dbReference type="RefSeq" id="WP_012660967.1">
    <property type="nucleotide sequence ID" value="NC_012039.1"/>
</dbReference>
<dbReference type="SMR" id="B9KEU8"/>
<dbReference type="STRING" id="306263.Cla_0220"/>
<dbReference type="KEGG" id="cla:CLA_0220"/>
<dbReference type="PATRIC" id="fig|306263.5.peg.219"/>
<dbReference type="eggNOG" id="COG0083">
    <property type="taxonomic scope" value="Bacteria"/>
</dbReference>
<dbReference type="HOGENOM" id="CLU_041243_0_0_7"/>
<dbReference type="UniPathway" id="UPA00050">
    <property type="reaction ID" value="UER00064"/>
</dbReference>
<dbReference type="Proteomes" id="UP000007727">
    <property type="component" value="Chromosome"/>
</dbReference>
<dbReference type="GO" id="GO:0005737">
    <property type="term" value="C:cytoplasm"/>
    <property type="evidence" value="ECO:0007669"/>
    <property type="project" value="UniProtKB-SubCell"/>
</dbReference>
<dbReference type="GO" id="GO:0005524">
    <property type="term" value="F:ATP binding"/>
    <property type="evidence" value="ECO:0007669"/>
    <property type="project" value="UniProtKB-UniRule"/>
</dbReference>
<dbReference type="GO" id="GO:0004413">
    <property type="term" value="F:homoserine kinase activity"/>
    <property type="evidence" value="ECO:0007669"/>
    <property type="project" value="UniProtKB-UniRule"/>
</dbReference>
<dbReference type="GO" id="GO:0009088">
    <property type="term" value="P:threonine biosynthetic process"/>
    <property type="evidence" value="ECO:0007669"/>
    <property type="project" value="UniProtKB-UniRule"/>
</dbReference>
<dbReference type="Gene3D" id="3.30.230.10">
    <property type="match status" value="1"/>
</dbReference>
<dbReference type="Gene3D" id="3.30.70.890">
    <property type="entry name" value="GHMP kinase, C-terminal domain"/>
    <property type="match status" value="1"/>
</dbReference>
<dbReference type="HAMAP" id="MF_00384">
    <property type="entry name" value="Homoser_kinase"/>
    <property type="match status" value="1"/>
</dbReference>
<dbReference type="InterPro" id="IPR013750">
    <property type="entry name" value="GHMP_kinase_C_dom"/>
</dbReference>
<dbReference type="InterPro" id="IPR036554">
    <property type="entry name" value="GHMP_kinase_C_sf"/>
</dbReference>
<dbReference type="InterPro" id="IPR006204">
    <property type="entry name" value="GHMP_kinase_N_dom"/>
</dbReference>
<dbReference type="InterPro" id="IPR006203">
    <property type="entry name" value="GHMP_knse_ATP-bd_CS"/>
</dbReference>
<dbReference type="InterPro" id="IPR000870">
    <property type="entry name" value="Homoserine_kinase"/>
</dbReference>
<dbReference type="InterPro" id="IPR020568">
    <property type="entry name" value="Ribosomal_Su5_D2-typ_SF"/>
</dbReference>
<dbReference type="InterPro" id="IPR014721">
    <property type="entry name" value="Ribsml_uS5_D2-typ_fold_subgr"/>
</dbReference>
<dbReference type="NCBIfam" id="TIGR00191">
    <property type="entry name" value="thrB"/>
    <property type="match status" value="1"/>
</dbReference>
<dbReference type="PANTHER" id="PTHR20861:SF1">
    <property type="entry name" value="HOMOSERINE KINASE"/>
    <property type="match status" value="1"/>
</dbReference>
<dbReference type="PANTHER" id="PTHR20861">
    <property type="entry name" value="HOMOSERINE/4-DIPHOSPHOCYTIDYL-2-C-METHYL-D-ERYTHRITOL KINASE"/>
    <property type="match status" value="1"/>
</dbReference>
<dbReference type="Pfam" id="PF08544">
    <property type="entry name" value="GHMP_kinases_C"/>
    <property type="match status" value="1"/>
</dbReference>
<dbReference type="Pfam" id="PF00288">
    <property type="entry name" value="GHMP_kinases_N"/>
    <property type="match status" value="1"/>
</dbReference>
<dbReference type="PIRSF" id="PIRSF000676">
    <property type="entry name" value="Homoser_kin"/>
    <property type="match status" value="1"/>
</dbReference>
<dbReference type="PRINTS" id="PR00958">
    <property type="entry name" value="HOMSERKINASE"/>
</dbReference>
<dbReference type="SUPFAM" id="SSF55060">
    <property type="entry name" value="GHMP Kinase, C-terminal domain"/>
    <property type="match status" value="1"/>
</dbReference>
<dbReference type="SUPFAM" id="SSF54211">
    <property type="entry name" value="Ribosomal protein S5 domain 2-like"/>
    <property type="match status" value="1"/>
</dbReference>
<dbReference type="PROSITE" id="PS00627">
    <property type="entry name" value="GHMP_KINASES_ATP"/>
    <property type="match status" value="1"/>
</dbReference>
<sequence length="292" mass="32664">MKILVPATSANLGPGFDCLGLSLKYFNQTIVEKSKFFSISIHGEGENNIYLKKNNSFVNIFYEIYQRLSGKKDNFRFVFQNNIPLARGMGSSSAVIIGAIACAYELSGFKADKNTILNEALKYENHPDNIAPAALGGFVCALTHNEKVLAIKKEVDKDLQAVITIPNVAMNTQKSRAVLAKKINLEDGVFNLCHASFLTACFLEKKYDLLKYASLDKLHQNQRMKLLPELFEVQKLALDNNALMSTLSGSGSSFFTLAYKDDAKKIKEKIKNKFAKFRVELLEFDDEGFKIC</sequence>
<keyword id="KW-0028">Amino-acid biosynthesis</keyword>
<keyword id="KW-0067">ATP-binding</keyword>
<keyword id="KW-0963">Cytoplasm</keyword>
<keyword id="KW-0418">Kinase</keyword>
<keyword id="KW-0547">Nucleotide-binding</keyword>
<keyword id="KW-1185">Reference proteome</keyword>
<keyword id="KW-0791">Threonine biosynthesis</keyword>
<keyword id="KW-0808">Transferase</keyword>
<gene>
    <name evidence="1" type="primary">thrB</name>
    <name type="ordered locus">Cla_0220</name>
</gene>
<organism>
    <name type="scientific">Campylobacter lari (strain RM2100 / D67 / ATCC BAA-1060)</name>
    <dbReference type="NCBI Taxonomy" id="306263"/>
    <lineage>
        <taxon>Bacteria</taxon>
        <taxon>Pseudomonadati</taxon>
        <taxon>Campylobacterota</taxon>
        <taxon>Epsilonproteobacteria</taxon>
        <taxon>Campylobacterales</taxon>
        <taxon>Campylobacteraceae</taxon>
        <taxon>Campylobacter</taxon>
    </lineage>
</organism>